<accession>C4LCT4</accession>
<dbReference type="EC" id="2.7.1.2" evidence="1"/>
<dbReference type="EMBL" id="CP001616">
    <property type="protein sequence ID" value="ACQ92648.1"/>
    <property type="molecule type" value="Genomic_DNA"/>
</dbReference>
<dbReference type="RefSeq" id="WP_012729247.1">
    <property type="nucleotide sequence ID" value="NC_012691.1"/>
</dbReference>
<dbReference type="SMR" id="C4LCT4"/>
<dbReference type="STRING" id="595494.Tola_1021"/>
<dbReference type="KEGG" id="tau:Tola_1021"/>
<dbReference type="eggNOG" id="COG0837">
    <property type="taxonomic scope" value="Bacteria"/>
</dbReference>
<dbReference type="HOGENOM" id="CLU_042582_1_0_6"/>
<dbReference type="OrthoDB" id="9800595at2"/>
<dbReference type="Proteomes" id="UP000009073">
    <property type="component" value="Chromosome"/>
</dbReference>
<dbReference type="GO" id="GO:0005829">
    <property type="term" value="C:cytosol"/>
    <property type="evidence" value="ECO:0007669"/>
    <property type="project" value="TreeGrafter"/>
</dbReference>
<dbReference type="GO" id="GO:0005524">
    <property type="term" value="F:ATP binding"/>
    <property type="evidence" value="ECO:0007669"/>
    <property type="project" value="UniProtKB-UniRule"/>
</dbReference>
<dbReference type="GO" id="GO:0005536">
    <property type="term" value="F:D-glucose binding"/>
    <property type="evidence" value="ECO:0007669"/>
    <property type="project" value="InterPro"/>
</dbReference>
<dbReference type="GO" id="GO:0004340">
    <property type="term" value="F:glucokinase activity"/>
    <property type="evidence" value="ECO:0007669"/>
    <property type="project" value="UniProtKB-UniRule"/>
</dbReference>
<dbReference type="GO" id="GO:0006096">
    <property type="term" value="P:glycolytic process"/>
    <property type="evidence" value="ECO:0007669"/>
    <property type="project" value="UniProtKB-UniRule"/>
</dbReference>
<dbReference type="CDD" id="cd24008">
    <property type="entry name" value="ASKHA_NBD_GLK"/>
    <property type="match status" value="1"/>
</dbReference>
<dbReference type="FunFam" id="3.40.367.20:FF:000002">
    <property type="entry name" value="Glucokinase"/>
    <property type="match status" value="1"/>
</dbReference>
<dbReference type="Gene3D" id="3.30.420.40">
    <property type="match status" value="1"/>
</dbReference>
<dbReference type="Gene3D" id="3.40.367.20">
    <property type="match status" value="1"/>
</dbReference>
<dbReference type="HAMAP" id="MF_00524">
    <property type="entry name" value="Glucokinase"/>
    <property type="match status" value="1"/>
</dbReference>
<dbReference type="InterPro" id="IPR043129">
    <property type="entry name" value="ATPase_NBD"/>
</dbReference>
<dbReference type="InterPro" id="IPR050201">
    <property type="entry name" value="Bacterial_glucokinase"/>
</dbReference>
<dbReference type="InterPro" id="IPR003836">
    <property type="entry name" value="Glucokinase"/>
</dbReference>
<dbReference type="NCBIfam" id="TIGR00749">
    <property type="entry name" value="glk"/>
    <property type="match status" value="1"/>
</dbReference>
<dbReference type="NCBIfam" id="NF001414">
    <property type="entry name" value="PRK00292.1-1"/>
    <property type="match status" value="1"/>
</dbReference>
<dbReference type="NCBIfam" id="NF001416">
    <property type="entry name" value="PRK00292.1-3"/>
    <property type="match status" value="1"/>
</dbReference>
<dbReference type="NCBIfam" id="NF009073">
    <property type="entry name" value="PRK12408.1"/>
    <property type="match status" value="1"/>
</dbReference>
<dbReference type="PANTHER" id="PTHR47690">
    <property type="entry name" value="GLUCOKINASE"/>
    <property type="match status" value="1"/>
</dbReference>
<dbReference type="PANTHER" id="PTHR47690:SF1">
    <property type="entry name" value="GLUCOKINASE"/>
    <property type="match status" value="1"/>
</dbReference>
<dbReference type="Pfam" id="PF02685">
    <property type="entry name" value="Glucokinase"/>
    <property type="match status" value="1"/>
</dbReference>
<dbReference type="SUPFAM" id="SSF53067">
    <property type="entry name" value="Actin-like ATPase domain"/>
    <property type="match status" value="1"/>
</dbReference>
<feature type="chain" id="PRO_1000211759" description="Glucokinase">
    <location>
        <begin position="1"/>
        <end position="321"/>
    </location>
</feature>
<feature type="binding site" evidence="1">
    <location>
        <begin position="8"/>
        <end position="13"/>
    </location>
    <ligand>
        <name>ATP</name>
        <dbReference type="ChEBI" id="CHEBI:30616"/>
    </ligand>
</feature>
<name>GLK_TOLAT</name>
<evidence type="ECO:0000255" key="1">
    <source>
        <dbReference type="HAMAP-Rule" id="MF_00524"/>
    </source>
</evidence>
<reference key="1">
    <citation type="submission" date="2009-05" db="EMBL/GenBank/DDBJ databases">
        <title>Complete sequence of Tolumonas auensis DSM 9187.</title>
        <authorList>
            <consortium name="US DOE Joint Genome Institute"/>
            <person name="Lucas S."/>
            <person name="Copeland A."/>
            <person name="Lapidus A."/>
            <person name="Glavina del Rio T."/>
            <person name="Tice H."/>
            <person name="Bruce D."/>
            <person name="Goodwin L."/>
            <person name="Pitluck S."/>
            <person name="Chertkov O."/>
            <person name="Brettin T."/>
            <person name="Detter J.C."/>
            <person name="Han C."/>
            <person name="Larimer F."/>
            <person name="Land M."/>
            <person name="Hauser L."/>
            <person name="Kyrpides N."/>
            <person name="Mikhailova N."/>
            <person name="Spring S."/>
            <person name="Beller H."/>
        </authorList>
    </citation>
    <scope>NUCLEOTIDE SEQUENCE [LARGE SCALE GENOMIC DNA]</scope>
    <source>
        <strain>DSM 9187 / NBRC 110442 / TA 4</strain>
    </source>
</reference>
<gene>
    <name evidence="1" type="primary">glk</name>
    <name type="ordered locus">Tola_1021</name>
</gene>
<keyword id="KW-0067">ATP-binding</keyword>
<keyword id="KW-0963">Cytoplasm</keyword>
<keyword id="KW-0324">Glycolysis</keyword>
<keyword id="KW-0418">Kinase</keyword>
<keyword id="KW-0547">Nucleotide-binding</keyword>
<keyword id="KW-1185">Reference proteome</keyword>
<keyword id="KW-0808">Transferase</keyword>
<protein>
    <recommendedName>
        <fullName evidence="1">Glucokinase</fullName>
        <ecNumber evidence="1">2.7.1.2</ecNumber>
    </recommendedName>
    <alternativeName>
        <fullName evidence="1">Glucose kinase</fullName>
    </alternativeName>
</protein>
<sequence>MAEQVLVGDVGGTNARLALCSLQDGSLSHIKNYSGAEYPSLEAVIRVYLEETAAKVSSACIAIACPITGDWVAMTNHTWAFSQSEMQQNLGLQHLSIINDFTAISMAIPALKDEDKIQFGGEAAQAGKPIAVYGAGTGLGVAHLVHSGEAWMSLPGEGGHVDFAPNSTEEVMVLEALREELGHVSAERLLSGPGLVNIYRGLVLSDDRVPENLQPKDVTERALADEDIDCRRALSLFCVLMGRFGGNLALNLGTFGGVYIAGGIVPRFLEFFKASGFRVAFEDKGRFHSYLEPIPVFLITHEQPGLLGSGAYLRQKLGYKL</sequence>
<comment type="catalytic activity">
    <reaction evidence="1">
        <text>D-glucose + ATP = D-glucose 6-phosphate + ADP + H(+)</text>
        <dbReference type="Rhea" id="RHEA:17825"/>
        <dbReference type="ChEBI" id="CHEBI:4167"/>
        <dbReference type="ChEBI" id="CHEBI:15378"/>
        <dbReference type="ChEBI" id="CHEBI:30616"/>
        <dbReference type="ChEBI" id="CHEBI:61548"/>
        <dbReference type="ChEBI" id="CHEBI:456216"/>
        <dbReference type="EC" id="2.7.1.2"/>
    </reaction>
</comment>
<comment type="subcellular location">
    <subcellularLocation>
        <location evidence="1">Cytoplasm</location>
    </subcellularLocation>
</comment>
<comment type="similarity">
    <text evidence="1">Belongs to the bacterial glucokinase family.</text>
</comment>
<proteinExistence type="inferred from homology"/>
<organism>
    <name type="scientific">Tolumonas auensis (strain DSM 9187 / NBRC 110442 / TA 4)</name>
    <dbReference type="NCBI Taxonomy" id="595494"/>
    <lineage>
        <taxon>Bacteria</taxon>
        <taxon>Pseudomonadati</taxon>
        <taxon>Pseudomonadota</taxon>
        <taxon>Gammaproteobacteria</taxon>
        <taxon>Aeromonadales</taxon>
        <taxon>Aeromonadaceae</taxon>
        <taxon>Tolumonas</taxon>
    </lineage>
</organism>